<sequence length="264" mass="31095">MPSIFAYQSSEVDWCESNFQYSELVAEFYNTFSNIPFFIFGPLMMLLMHPYAQKRSRYIYVVWVLFMIIGLFSMYFHMTLSFLGQLLDEIAILWLLGSGYSIWMPRCYFPSFLGGNRSQFIRLVFITTVVSTLLSFLRPTVNAYALNSIALHILYIVCQEYRKTSNKELRHLIEVSVVLWAVALTSWISDRLLCSFWQRIHFFYLHSIWHVLISITFPYGMVTMALVDANYEMPGETLKVRYWPRDSWPVGLPYVEIRGDDKDC</sequence>
<name>ACER1_HUMAN</name>
<evidence type="ECO:0000250" key="1">
    <source>
        <dbReference type="UniProtKB" id="Q8R4X1"/>
    </source>
</evidence>
<evidence type="ECO:0000250" key="2">
    <source>
        <dbReference type="UniProtKB" id="Q9NUN7"/>
    </source>
</evidence>
<evidence type="ECO:0000255" key="3"/>
<evidence type="ECO:0000269" key="4">
    <source>
    </source>
</evidence>
<evidence type="ECO:0000269" key="5">
    <source>
    </source>
</evidence>
<evidence type="ECO:0000269" key="6">
    <source>
    </source>
</evidence>
<evidence type="ECO:0000269" key="7">
    <source>
    </source>
</evidence>
<evidence type="ECO:0000303" key="8">
    <source>
    </source>
</evidence>
<evidence type="ECO:0000305" key="9"/>
<evidence type="ECO:0000312" key="10">
    <source>
        <dbReference type="HGNC" id="HGNC:18356"/>
    </source>
</evidence>
<dbReference type="EC" id="3.5.1.-" evidence="6 7"/>
<dbReference type="EC" id="3.5.1.23" evidence="5"/>
<dbReference type="EMBL" id="AF347024">
    <property type="protein sequence ID" value="AAL83822.1"/>
    <property type="molecule type" value="mRNA"/>
</dbReference>
<dbReference type="EMBL" id="BC112122">
    <property type="protein sequence ID" value="AAI12123.1"/>
    <property type="molecule type" value="mRNA"/>
</dbReference>
<dbReference type="EMBL" id="BC112124">
    <property type="protein sequence ID" value="AAI12125.1"/>
    <property type="molecule type" value="mRNA"/>
</dbReference>
<dbReference type="CCDS" id="CCDS12161.1"/>
<dbReference type="RefSeq" id="NP_597999.1">
    <property type="nucleotide sequence ID" value="NM_133492.3"/>
</dbReference>
<dbReference type="SMR" id="Q8TDN7"/>
<dbReference type="BioGRID" id="125942">
    <property type="interactions" value="3"/>
</dbReference>
<dbReference type="FunCoup" id="Q8TDN7">
    <property type="interactions" value="316"/>
</dbReference>
<dbReference type="IntAct" id="Q8TDN7">
    <property type="interactions" value="2"/>
</dbReference>
<dbReference type="STRING" id="9606.ENSP00000301452"/>
<dbReference type="ChEMBL" id="CHEMBL3351194"/>
<dbReference type="SwissLipids" id="SLP:000000165"/>
<dbReference type="BioMuta" id="ACER1"/>
<dbReference type="DMDM" id="74715919"/>
<dbReference type="MassIVE" id="Q8TDN7"/>
<dbReference type="PaxDb" id="9606-ENSP00000301452"/>
<dbReference type="PeptideAtlas" id="Q8TDN7"/>
<dbReference type="Antibodypedia" id="49939">
    <property type="antibodies" value="144 antibodies from 24 providers"/>
</dbReference>
<dbReference type="DNASU" id="125981"/>
<dbReference type="Ensembl" id="ENST00000301452.5">
    <property type="protein sequence ID" value="ENSP00000301452.3"/>
    <property type="gene ID" value="ENSG00000167769.5"/>
</dbReference>
<dbReference type="GeneID" id="125981"/>
<dbReference type="KEGG" id="hsa:125981"/>
<dbReference type="MANE-Select" id="ENST00000301452.5">
    <property type="protein sequence ID" value="ENSP00000301452.3"/>
    <property type="RefSeq nucleotide sequence ID" value="NM_133492.3"/>
    <property type="RefSeq protein sequence ID" value="NP_597999.1"/>
</dbReference>
<dbReference type="UCSC" id="uc002mel.3">
    <property type="organism name" value="human"/>
</dbReference>
<dbReference type="AGR" id="HGNC:18356"/>
<dbReference type="CTD" id="125981"/>
<dbReference type="DisGeNET" id="125981"/>
<dbReference type="GeneCards" id="ACER1"/>
<dbReference type="HGNC" id="HGNC:18356">
    <property type="gene designation" value="ACER1"/>
</dbReference>
<dbReference type="HPA" id="ENSG00000167769">
    <property type="expression patterns" value="Tissue enriched (skin)"/>
</dbReference>
<dbReference type="MIM" id="613491">
    <property type="type" value="gene"/>
</dbReference>
<dbReference type="neXtProt" id="NX_Q8TDN7"/>
<dbReference type="OpenTargets" id="ENSG00000167769"/>
<dbReference type="PharmGKB" id="PA164714838"/>
<dbReference type="VEuPathDB" id="HostDB:ENSG00000167769"/>
<dbReference type="eggNOG" id="KOG2329">
    <property type="taxonomic scope" value="Eukaryota"/>
</dbReference>
<dbReference type="GeneTree" id="ENSGT00730000110920"/>
<dbReference type="HOGENOM" id="CLU_088280_1_0_1"/>
<dbReference type="InParanoid" id="Q8TDN7"/>
<dbReference type="OMA" id="NYKHSEH"/>
<dbReference type="OrthoDB" id="187171at2759"/>
<dbReference type="PAN-GO" id="Q8TDN7">
    <property type="GO annotations" value="4 GO annotations based on evolutionary models"/>
</dbReference>
<dbReference type="PhylomeDB" id="Q8TDN7"/>
<dbReference type="TreeFam" id="TF313019"/>
<dbReference type="BRENDA" id="3.5.1.23">
    <property type="organism ID" value="2681"/>
</dbReference>
<dbReference type="PathwayCommons" id="Q8TDN7"/>
<dbReference type="Reactome" id="R-HSA-9845614">
    <property type="pathway name" value="Sphingolipid catabolism"/>
</dbReference>
<dbReference type="SignaLink" id="Q8TDN7"/>
<dbReference type="UniPathway" id="UPA00222"/>
<dbReference type="BioGRID-ORCS" id="125981">
    <property type="hits" value="23 hits in 1153 CRISPR screens"/>
</dbReference>
<dbReference type="ChiTaRS" id="ACER1">
    <property type="organism name" value="human"/>
</dbReference>
<dbReference type="GeneWiki" id="ACER1"/>
<dbReference type="GenomeRNAi" id="125981"/>
<dbReference type="Pharos" id="Q8TDN7">
    <property type="development level" value="Tbio"/>
</dbReference>
<dbReference type="PRO" id="PR:Q8TDN7"/>
<dbReference type="Proteomes" id="UP000005640">
    <property type="component" value="Chromosome 19"/>
</dbReference>
<dbReference type="RNAct" id="Q8TDN7">
    <property type="molecule type" value="protein"/>
</dbReference>
<dbReference type="Bgee" id="ENSG00000167769">
    <property type="expression patterns" value="Expressed in skin of leg and 75 other cell types or tissues"/>
</dbReference>
<dbReference type="GO" id="GO:0005783">
    <property type="term" value="C:endoplasmic reticulum"/>
    <property type="evidence" value="ECO:0000314"/>
    <property type="project" value="BHF-UCL"/>
</dbReference>
<dbReference type="GO" id="GO:0005789">
    <property type="term" value="C:endoplasmic reticulum membrane"/>
    <property type="evidence" value="ECO:0000304"/>
    <property type="project" value="Reactome"/>
</dbReference>
<dbReference type="GO" id="GO:0046872">
    <property type="term" value="F:metal ion binding"/>
    <property type="evidence" value="ECO:0007669"/>
    <property type="project" value="UniProtKB-KW"/>
</dbReference>
<dbReference type="GO" id="GO:0017040">
    <property type="term" value="F:N-acylsphingosine amidohydrolase activity"/>
    <property type="evidence" value="ECO:0000314"/>
    <property type="project" value="BHF-UCL"/>
</dbReference>
<dbReference type="GO" id="GO:0030154">
    <property type="term" value="P:cell differentiation"/>
    <property type="evidence" value="ECO:0000315"/>
    <property type="project" value="BHF-UCL"/>
</dbReference>
<dbReference type="GO" id="GO:0071277">
    <property type="term" value="P:cellular response to calcium ion"/>
    <property type="evidence" value="ECO:0000314"/>
    <property type="project" value="BHF-UCL"/>
</dbReference>
<dbReference type="GO" id="GO:0046514">
    <property type="term" value="P:ceramide catabolic process"/>
    <property type="evidence" value="ECO:0000315"/>
    <property type="project" value="UniProtKB"/>
</dbReference>
<dbReference type="GO" id="GO:0008544">
    <property type="term" value="P:epidermis development"/>
    <property type="evidence" value="ECO:0000270"/>
    <property type="project" value="BHF-UCL"/>
</dbReference>
<dbReference type="GO" id="GO:0030216">
    <property type="term" value="P:keratinocyte differentiation"/>
    <property type="evidence" value="ECO:0000270"/>
    <property type="project" value="BHF-UCL"/>
</dbReference>
<dbReference type="GO" id="GO:0019216">
    <property type="term" value="P:regulation of lipid metabolic process"/>
    <property type="evidence" value="ECO:0007669"/>
    <property type="project" value="Ensembl"/>
</dbReference>
<dbReference type="GO" id="GO:0010446">
    <property type="term" value="P:response to alkaline pH"/>
    <property type="evidence" value="ECO:0000314"/>
    <property type="project" value="BHF-UCL"/>
</dbReference>
<dbReference type="GO" id="GO:0048733">
    <property type="term" value="P:sebaceous gland development"/>
    <property type="evidence" value="ECO:0007669"/>
    <property type="project" value="Ensembl"/>
</dbReference>
<dbReference type="GO" id="GO:0030148">
    <property type="term" value="P:sphingolipid biosynthetic process"/>
    <property type="evidence" value="ECO:0000314"/>
    <property type="project" value="BHF-UCL"/>
</dbReference>
<dbReference type="GO" id="GO:0030149">
    <property type="term" value="P:sphingolipid catabolic process"/>
    <property type="evidence" value="ECO:0000304"/>
    <property type="project" value="Reactome"/>
</dbReference>
<dbReference type="GO" id="GO:0006665">
    <property type="term" value="P:sphingolipid metabolic process"/>
    <property type="evidence" value="ECO:0000250"/>
    <property type="project" value="BHF-UCL"/>
</dbReference>
<dbReference type="GO" id="GO:0046512">
    <property type="term" value="P:sphingosine biosynthetic process"/>
    <property type="evidence" value="ECO:0000314"/>
    <property type="project" value="BHF-UCL"/>
</dbReference>
<dbReference type="InterPro" id="IPR008901">
    <property type="entry name" value="ACER"/>
</dbReference>
<dbReference type="PANTHER" id="PTHR46139">
    <property type="entry name" value="ALKALINE CERAMIDASE"/>
    <property type="match status" value="1"/>
</dbReference>
<dbReference type="PANTHER" id="PTHR46139:SF2">
    <property type="entry name" value="ALKALINE CERAMIDASE 1"/>
    <property type="match status" value="1"/>
</dbReference>
<dbReference type="Pfam" id="PF05875">
    <property type="entry name" value="Ceramidase"/>
    <property type="match status" value="1"/>
</dbReference>
<accession>Q8TDN7</accession>
<comment type="function">
    <text evidence="5 6 7 8">Endoplasmic reticulum ceramidase that catalyzes the hydrolysis of ceramides into sphingosine and free fatty acids at alkaline pH (PubMed:17713573, PubMed:20207939, PubMed:20628055). Ceramides, sphingosine, and its phosphorylated form sphingosine-1-phosphate are bioactive lipids that mediate cellular signaling pathways regulating several biological processes including cell proliferation, apoptosis and differentiation (PubMed:12783875). Exhibits a strong substrate specificity towards the natural stereoisomer of ceramides with D-erythro-sphingosine as a backbone and has a higher activity towards very long-chain unsaturated fatty acids like the C24:1-ceramide (PubMed:17713573, PubMed:20207939). May also hydrolyze dihydroceramides to produce dihydrosphingosine (PubMed:20207939, PubMed:20628055). ACER1 is a skin-specific ceramidase that regulates the levels of ceramides, sphingosine and sphingosine-1-phosphate in the epidermis, mediates the calcium-induced differentiation of epidermal keratinocytes and more generally plays an important role in skin homeostasis (PubMed:17713573).</text>
</comment>
<comment type="catalytic activity">
    <reaction evidence="5">
        <text>an N-acylsphing-4-enine + H2O = sphing-4-enine + a fatty acid</text>
        <dbReference type="Rhea" id="RHEA:20856"/>
        <dbReference type="ChEBI" id="CHEBI:15377"/>
        <dbReference type="ChEBI" id="CHEBI:28868"/>
        <dbReference type="ChEBI" id="CHEBI:52639"/>
        <dbReference type="ChEBI" id="CHEBI:57756"/>
        <dbReference type="EC" id="3.5.1.23"/>
    </reaction>
    <physiologicalReaction direction="left-to-right" evidence="5">
        <dbReference type="Rhea" id="RHEA:20857"/>
    </physiologicalReaction>
</comment>
<comment type="catalytic activity">
    <reaction evidence="5">
        <text>N-tetracosanoyl-sphing-4-enine + H2O = tetracosanoate + sphing-4-enine</text>
        <dbReference type="Rhea" id="RHEA:41283"/>
        <dbReference type="ChEBI" id="CHEBI:15377"/>
        <dbReference type="ChEBI" id="CHEBI:31014"/>
        <dbReference type="ChEBI" id="CHEBI:57756"/>
        <dbReference type="ChEBI" id="CHEBI:72965"/>
    </reaction>
    <physiologicalReaction direction="left-to-right" evidence="5">
        <dbReference type="Rhea" id="RHEA:41284"/>
    </physiologicalReaction>
</comment>
<comment type="catalytic activity">
    <reaction evidence="6 7">
        <text>an N-acylsphinganine + H2O = sphinganine + a fatty acid</text>
        <dbReference type="Rhea" id="RHEA:33551"/>
        <dbReference type="ChEBI" id="CHEBI:15377"/>
        <dbReference type="ChEBI" id="CHEBI:28868"/>
        <dbReference type="ChEBI" id="CHEBI:31488"/>
        <dbReference type="ChEBI" id="CHEBI:57817"/>
    </reaction>
    <physiologicalReaction direction="left-to-right" evidence="7">
        <dbReference type="Rhea" id="RHEA:33552"/>
    </physiologicalReaction>
</comment>
<comment type="catalytic activity">
    <reaction evidence="7">
        <text>N-(9Z-octadecenoyl)-sphing-4-enine + H2O = sphing-4-enine + (9Z)-octadecenoate</text>
        <dbReference type="Rhea" id="RHEA:41299"/>
        <dbReference type="ChEBI" id="CHEBI:15377"/>
        <dbReference type="ChEBI" id="CHEBI:30823"/>
        <dbReference type="ChEBI" id="CHEBI:57756"/>
        <dbReference type="ChEBI" id="CHEBI:77996"/>
    </reaction>
    <physiologicalReaction direction="left-to-right" evidence="7">
        <dbReference type="Rhea" id="RHEA:41300"/>
    </physiologicalReaction>
</comment>
<comment type="catalytic activity">
    <reaction evidence="5">
        <text>N-(15Z-tetracosenoyl)-sphing-4-enine + H2O = (15Z)-tetracosenoate + sphing-4-enine</text>
        <dbReference type="Rhea" id="RHEA:41267"/>
        <dbReference type="ChEBI" id="CHEBI:15377"/>
        <dbReference type="ChEBI" id="CHEBI:32392"/>
        <dbReference type="ChEBI" id="CHEBI:57756"/>
        <dbReference type="ChEBI" id="CHEBI:74450"/>
    </reaction>
    <physiologicalReaction direction="left-to-right" evidence="5">
        <dbReference type="Rhea" id="RHEA:41268"/>
    </physiologicalReaction>
</comment>
<comment type="cofactor">
    <cofactor evidence="2">
        <name>Zn(2+)</name>
        <dbReference type="ChEBI" id="CHEBI:29105"/>
    </cofactor>
</comment>
<comment type="activity regulation">
    <text evidence="1 5">Inhibited by sphingosine (By similarity). Activity is Ca(2+)-dependent (PubMed:17713573).</text>
</comment>
<comment type="biophysicochemical properties">
    <phDependence>
        <text evidence="5">Optimum pH is 8.0.</text>
    </phDependence>
</comment>
<comment type="pathway">
    <text evidence="5 6">Lipid metabolism; sphingolipid metabolism.</text>
</comment>
<comment type="interaction">
    <interactant intactId="EBI-13074986">
        <id>Q8TDN7</id>
    </interactant>
    <interactant intactId="EBI-711788">
        <id>Q00013</id>
        <label>MPP1</label>
    </interactant>
    <organismsDiffer>false</organismsDiffer>
    <experiments>3</experiments>
</comment>
<comment type="subcellular location">
    <subcellularLocation>
        <location evidence="5">Endoplasmic reticulum membrane</location>
        <topology evidence="3">Multi-pass membrane protein</topology>
    </subcellularLocation>
</comment>
<comment type="tissue specificity">
    <text evidence="4 5">Mainly expressed in epidermis.</text>
</comment>
<comment type="induction">
    <text evidence="5">Up-regulated by Ca(2+) (PubMed:17713573). Down-regulated by epidermal growth factor/EGF (PubMed:17713573).</text>
</comment>
<comment type="similarity">
    <text evidence="9">Belongs to the alkaline ceramidase family.</text>
</comment>
<gene>
    <name evidence="10" type="primary">ACER1</name>
    <name type="synonym">ASAH3</name>
</gene>
<organism>
    <name type="scientific">Homo sapiens</name>
    <name type="common">Human</name>
    <dbReference type="NCBI Taxonomy" id="9606"/>
    <lineage>
        <taxon>Eukaryota</taxon>
        <taxon>Metazoa</taxon>
        <taxon>Chordata</taxon>
        <taxon>Craniata</taxon>
        <taxon>Vertebrata</taxon>
        <taxon>Euteleostomi</taxon>
        <taxon>Mammalia</taxon>
        <taxon>Eutheria</taxon>
        <taxon>Euarchontoglires</taxon>
        <taxon>Primates</taxon>
        <taxon>Haplorrhini</taxon>
        <taxon>Catarrhini</taxon>
        <taxon>Hominidae</taxon>
        <taxon>Homo</taxon>
    </lineage>
</organism>
<proteinExistence type="evidence at protein level"/>
<keyword id="KW-0106">Calcium</keyword>
<keyword id="KW-0256">Endoplasmic reticulum</keyword>
<keyword id="KW-0378">Hydrolase</keyword>
<keyword id="KW-0443">Lipid metabolism</keyword>
<keyword id="KW-0472">Membrane</keyword>
<keyword id="KW-0479">Metal-binding</keyword>
<keyword id="KW-1267">Proteomics identification</keyword>
<keyword id="KW-1185">Reference proteome</keyword>
<keyword id="KW-0746">Sphingolipid metabolism</keyword>
<keyword id="KW-0812">Transmembrane</keyword>
<keyword id="KW-1133">Transmembrane helix</keyword>
<keyword id="KW-0862">Zinc</keyword>
<protein>
    <recommendedName>
        <fullName evidence="9">Alkaline ceramidase 1</fullName>
        <shortName>AlkCDase 1</shortName>
        <shortName>Alkaline CDase 1</shortName>
        <ecNumber evidence="6 7">3.5.1.-</ecNumber>
        <ecNumber evidence="5">3.5.1.23</ecNumber>
    </recommendedName>
    <alternativeName>
        <fullName>Acylsphingosine deacylase 3</fullName>
    </alternativeName>
    <alternativeName>
        <fullName>N-acylsphingosine amidohydrolase 3</fullName>
    </alternativeName>
</protein>
<reference key="1">
    <citation type="journal article" date="2003" name="J. Biol. Chem.">
        <title>Cloning and characterization of a mouse endoplasmic reticulum alkaline ceramidase: an enzyme that preferentially regulates metabolism of very long chain ceramides.</title>
        <authorList>
            <person name="Mao C."/>
            <person name="Xu R."/>
            <person name="Szulc Z.M."/>
            <person name="Bielawski J."/>
            <person name="Becker K.P."/>
            <person name="Bielawska A."/>
            <person name="Galadari S.H."/>
            <person name="Hu W."/>
            <person name="Obeid L.M."/>
        </authorList>
    </citation>
    <scope>NUCLEOTIDE SEQUENCE [MRNA]</scope>
</reference>
<reference key="2">
    <citation type="journal article" date="2004" name="Genome Res.">
        <title>The status, quality, and expansion of the NIH full-length cDNA project: the Mammalian Gene Collection (MGC).</title>
        <authorList>
            <consortium name="The MGC Project Team"/>
        </authorList>
    </citation>
    <scope>NUCLEOTIDE SEQUENCE [LARGE SCALE MRNA]</scope>
</reference>
<reference key="3">
    <citation type="journal article" date="2006" name="J. Lipid Res.">
        <title>Differentiation-associated expression of ceramidase isoforms in cultured keratinocytes and epidermis.</title>
        <authorList>
            <person name="Houben E."/>
            <person name="Holleran W.M."/>
            <person name="Yaginuma T."/>
            <person name="Mao C."/>
            <person name="Obeid L.M."/>
            <person name="Rogiers V."/>
            <person name="Takagi Y."/>
            <person name="Elias P.M."/>
            <person name="Uchida Y."/>
        </authorList>
    </citation>
    <scope>TISSUE SPECIFICITY</scope>
</reference>
<reference key="4">
    <citation type="journal article" date="2008" name="J. Invest. Dermatol.">
        <title>Upregulation of the human alkaline ceramidase 1 and acid ceramidase mediates calcium-induced differentiation of epidermal keratinocytes.</title>
        <authorList>
            <person name="Sun W."/>
            <person name="Xu R."/>
            <person name="Hu W."/>
            <person name="Jin J."/>
            <person name="Crellin H.A."/>
            <person name="Bielawski J."/>
            <person name="Szulc Z.M."/>
            <person name="Thiers B.H."/>
            <person name="Obeid L.M."/>
            <person name="Mao C."/>
        </authorList>
    </citation>
    <scope>FUNCTION</scope>
    <scope>CATALYTIC ACTIVITY</scope>
    <scope>ACTIVITY REGULATION</scope>
    <scope>PATHWAY</scope>
    <scope>SUBSTRATE SPECIFICITY</scope>
    <scope>BIOPHYSICOCHEMICAL PROPERTIES</scope>
    <scope>SUBCELLULAR LOCATION</scope>
    <scope>TISSUE SPECIFICITY</scope>
    <scope>INDUCTION BY CALCIUM</scope>
</reference>
<reference key="5">
    <citation type="journal article" date="2010" name="FASEB J.">
        <title>Role of alkaline ceramidases in the generation of sphingosine and its phosphate in erythrocytes.</title>
        <authorList>
            <person name="Xu R."/>
            <person name="Sun W."/>
            <person name="Jin J."/>
            <person name="Obeid L.M."/>
            <person name="Mao C."/>
        </authorList>
    </citation>
    <scope>FUNCTION</scope>
    <scope>CATALYTIC ACTIVITY</scope>
    <scope>PATHWAY</scope>
</reference>
<reference key="6">
    <citation type="journal article" date="2010" name="J. Biol. Chem.">
        <title>Alkaline ceramidase 2 (ACER2) and its product dihydrosphingosine mediate the cytotoxicity of N-(4-hydroxyphenyl)retinamide in tumor cells.</title>
        <authorList>
            <person name="Mao Z."/>
            <person name="Sun W."/>
            <person name="Xu R."/>
            <person name="Novgorodov S."/>
            <person name="Szulc Z.M."/>
            <person name="Bielawski J."/>
            <person name="Obeid L.M."/>
            <person name="Mao C."/>
        </authorList>
    </citation>
    <scope>FUNCTION</scope>
    <scope>CATALYTIC ACTIVITY</scope>
</reference>
<feature type="chain" id="PRO_0000247745" description="Alkaline ceramidase 1">
    <location>
        <begin position="1"/>
        <end position="264"/>
    </location>
</feature>
<feature type="topological domain" description="Lumenal" evidence="3">
    <location>
        <begin position="1"/>
        <end position="27"/>
    </location>
</feature>
<feature type="transmembrane region" description="Helical" evidence="3">
    <location>
        <begin position="28"/>
        <end position="48"/>
    </location>
</feature>
<feature type="topological domain" description="Cytoplasmic" evidence="3">
    <location>
        <begin position="49"/>
        <end position="57"/>
    </location>
</feature>
<feature type="transmembrane region" description="Helical" evidence="3">
    <location>
        <begin position="58"/>
        <end position="78"/>
    </location>
</feature>
<feature type="topological domain" description="Lumenal" evidence="3">
    <location>
        <begin position="79"/>
        <end position="81"/>
    </location>
</feature>
<feature type="transmembrane region" description="Helical" evidence="3">
    <location>
        <begin position="82"/>
        <end position="102"/>
    </location>
</feature>
<feature type="topological domain" description="Cytoplasmic" evidence="3">
    <location>
        <begin position="103"/>
        <end position="119"/>
    </location>
</feature>
<feature type="transmembrane region" description="Helical" evidence="3">
    <location>
        <begin position="120"/>
        <end position="137"/>
    </location>
</feature>
<feature type="topological domain" description="Lumenal" evidence="3">
    <location>
        <position position="138"/>
    </location>
</feature>
<feature type="transmembrane region" description="Helical" evidence="3">
    <location>
        <begin position="139"/>
        <end position="159"/>
    </location>
</feature>
<feature type="topological domain" description="Cytoplasmic" evidence="3">
    <location>
        <begin position="160"/>
        <end position="176"/>
    </location>
</feature>
<feature type="transmembrane region" description="Helical" evidence="3">
    <location>
        <begin position="177"/>
        <end position="197"/>
    </location>
</feature>
<feature type="topological domain" description="Lumenal" evidence="3">
    <location>
        <begin position="198"/>
        <end position="206"/>
    </location>
</feature>
<feature type="transmembrane region" description="Helical" evidence="3">
    <location>
        <begin position="207"/>
        <end position="227"/>
    </location>
</feature>
<feature type="topological domain" description="Cytoplasmic" evidence="3">
    <location>
        <begin position="228"/>
        <end position="264"/>
    </location>
</feature>
<feature type="binding site" evidence="2">
    <location>
        <position position="13"/>
    </location>
    <ligand>
        <name>Ca(2+)</name>
        <dbReference type="ChEBI" id="CHEBI:29108"/>
    </ligand>
</feature>
<feature type="binding site" evidence="2">
    <location>
        <position position="14"/>
    </location>
    <ligand>
        <name>Ca(2+)</name>
        <dbReference type="ChEBI" id="CHEBI:29108"/>
    </ligand>
</feature>
<feature type="binding site" evidence="2">
    <location>
        <position position="16"/>
    </location>
    <ligand>
        <name>Ca(2+)</name>
        <dbReference type="ChEBI" id="CHEBI:29108"/>
    </ligand>
</feature>
<feature type="binding site" evidence="2">
    <location>
        <position position="18"/>
    </location>
    <ligand>
        <name>Ca(2+)</name>
        <dbReference type="ChEBI" id="CHEBI:29108"/>
    </ligand>
</feature>
<feature type="binding site" evidence="2">
    <location>
        <position position="27"/>
    </location>
    <ligand>
        <name>Ca(2+)</name>
        <dbReference type="ChEBI" id="CHEBI:29108"/>
    </ligand>
</feature>
<feature type="binding site" evidence="2">
    <location>
        <position position="77"/>
    </location>
    <ligand>
        <name>Zn(2+)</name>
        <dbReference type="ChEBI" id="CHEBI:29105"/>
        <note>catalytic</note>
    </ligand>
</feature>
<feature type="binding site" evidence="2">
    <location>
        <position position="206"/>
    </location>
    <ligand>
        <name>Zn(2+)</name>
        <dbReference type="ChEBI" id="CHEBI:29105"/>
        <note>catalytic</note>
    </ligand>
</feature>
<feature type="binding site" evidence="2">
    <location>
        <position position="210"/>
    </location>
    <ligand>
        <name>Zn(2+)</name>
        <dbReference type="ChEBI" id="CHEBI:29105"/>
        <note>catalytic</note>
    </ligand>
</feature>